<accession>Q30RL0</accession>
<name>DAPD_SULDN</name>
<protein>
    <recommendedName>
        <fullName evidence="1">2,3,4,5-tetrahydropyridine-2,6-dicarboxylate N-succinyltransferase</fullName>
        <ecNumber evidence="1">2.3.1.117</ecNumber>
    </recommendedName>
    <alternativeName>
        <fullName evidence="1">Tetrahydrodipicolinate N-succinyltransferase</fullName>
        <shortName evidence="1">THDP succinyltransferase</shortName>
        <shortName evidence="1">THP succinyltransferase</shortName>
    </alternativeName>
    <alternativeName>
        <fullName evidence="1">Tetrahydropicolinate succinylase</fullName>
    </alternativeName>
</protein>
<dbReference type="EC" id="2.3.1.117" evidence="1"/>
<dbReference type="EMBL" id="CP000153">
    <property type="protein sequence ID" value="ABB44371.1"/>
    <property type="status" value="ALT_INIT"/>
    <property type="molecule type" value="Genomic_DNA"/>
</dbReference>
<dbReference type="RefSeq" id="WP_041672250.1">
    <property type="nucleotide sequence ID" value="NC_007575.1"/>
</dbReference>
<dbReference type="SMR" id="Q30RL0"/>
<dbReference type="STRING" id="326298.Suden_1093"/>
<dbReference type="KEGG" id="tdn:Suden_1093"/>
<dbReference type="eggNOG" id="COG2171">
    <property type="taxonomic scope" value="Bacteria"/>
</dbReference>
<dbReference type="HOGENOM" id="CLU_057490_1_0_7"/>
<dbReference type="OrthoDB" id="9782799at2"/>
<dbReference type="UniPathway" id="UPA00034">
    <property type="reaction ID" value="UER00019"/>
</dbReference>
<dbReference type="Proteomes" id="UP000002714">
    <property type="component" value="Chromosome"/>
</dbReference>
<dbReference type="GO" id="GO:0005737">
    <property type="term" value="C:cytoplasm"/>
    <property type="evidence" value="ECO:0007669"/>
    <property type="project" value="UniProtKB-SubCell"/>
</dbReference>
<dbReference type="GO" id="GO:0008666">
    <property type="term" value="F:2,3,4,5-tetrahydropyridine-2,6-dicarboxylate N-succinyltransferase activity"/>
    <property type="evidence" value="ECO:0007669"/>
    <property type="project" value="UniProtKB-EC"/>
</dbReference>
<dbReference type="GO" id="GO:0019877">
    <property type="term" value="P:diaminopimelate biosynthetic process"/>
    <property type="evidence" value="ECO:0007669"/>
    <property type="project" value="UniProtKB-KW"/>
</dbReference>
<dbReference type="GO" id="GO:0009089">
    <property type="term" value="P:lysine biosynthetic process via diaminopimelate"/>
    <property type="evidence" value="ECO:0007669"/>
    <property type="project" value="UniProtKB-UniPathway"/>
</dbReference>
<dbReference type="CDD" id="cd04649">
    <property type="entry name" value="LbH_THP_succinylT_putative"/>
    <property type="match status" value="1"/>
</dbReference>
<dbReference type="Gene3D" id="3.30.70.2010">
    <property type="match status" value="1"/>
</dbReference>
<dbReference type="Gene3D" id="2.160.10.10">
    <property type="entry name" value="Hexapeptide repeat proteins"/>
    <property type="match status" value="1"/>
</dbReference>
<dbReference type="Gene3D" id="3.30.60.70">
    <property type="entry name" value="Trimeric LpxA-like enzymes"/>
    <property type="match status" value="1"/>
</dbReference>
<dbReference type="HAMAP" id="MF_02122">
    <property type="entry name" value="DapD_type2"/>
    <property type="match status" value="1"/>
</dbReference>
<dbReference type="InterPro" id="IPR001451">
    <property type="entry name" value="Hexapep"/>
</dbReference>
<dbReference type="InterPro" id="IPR032784">
    <property type="entry name" value="THDPS_M"/>
</dbReference>
<dbReference type="InterPro" id="IPR038361">
    <property type="entry name" value="THDPS_M_sf"/>
</dbReference>
<dbReference type="InterPro" id="IPR011004">
    <property type="entry name" value="Trimer_LpxA-like_sf"/>
</dbReference>
<dbReference type="InterPro" id="IPR026586">
    <property type="entry name" value="Type2_DapD"/>
</dbReference>
<dbReference type="Pfam" id="PF14602">
    <property type="entry name" value="Hexapep_2"/>
    <property type="match status" value="1"/>
</dbReference>
<dbReference type="Pfam" id="PF14789">
    <property type="entry name" value="THDPS_M"/>
    <property type="match status" value="1"/>
</dbReference>
<dbReference type="Pfam" id="PF14790">
    <property type="entry name" value="THDPS_N"/>
    <property type="match status" value="1"/>
</dbReference>
<dbReference type="SUPFAM" id="SSF51161">
    <property type="entry name" value="Trimeric LpxA-like enzymes"/>
    <property type="match status" value="1"/>
</dbReference>
<organism>
    <name type="scientific">Sulfurimonas denitrificans (strain ATCC 33889 / DSM 1251)</name>
    <name type="common">Thiomicrospira denitrificans (strain ATCC 33889 / DSM 1251)</name>
    <dbReference type="NCBI Taxonomy" id="326298"/>
    <lineage>
        <taxon>Bacteria</taxon>
        <taxon>Pseudomonadati</taxon>
        <taxon>Campylobacterota</taxon>
        <taxon>Epsilonproteobacteria</taxon>
        <taxon>Campylobacterales</taxon>
        <taxon>Sulfurimonadaceae</taxon>
        <taxon>Sulfurimonas</taxon>
    </lineage>
</organism>
<gene>
    <name evidence="1" type="primary">dapD</name>
    <name type="ordered locus">Suden_1093</name>
</gene>
<reference key="1">
    <citation type="journal article" date="2008" name="Appl. Environ. Microbiol.">
        <title>Genome of the epsilonproteobacterial chemolithoautotroph Sulfurimonas denitrificans.</title>
        <authorList>
            <person name="Sievert S.M."/>
            <person name="Scott K.M."/>
            <person name="Klotz M.G."/>
            <person name="Chain P.S.G."/>
            <person name="Hauser L.J."/>
            <person name="Hemp J."/>
            <person name="Huegler M."/>
            <person name="Land M."/>
            <person name="Lapidus A."/>
            <person name="Larimer F.W."/>
            <person name="Lucas S."/>
            <person name="Malfatti S.A."/>
            <person name="Meyer F."/>
            <person name="Paulsen I.T."/>
            <person name="Ren Q."/>
            <person name="Simon J."/>
            <person name="Bailey K."/>
            <person name="Diaz E."/>
            <person name="Fitzpatrick K.A."/>
            <person name="Glover B."/>
            <person name="Gwatney N."/>
            <person name="Korajkic A."/>
            <person name="Long A."/>
            <person name="Mobberley J.M."/>
            <person name="Pantry S.N."/>
            <person name="Pazder G."/>
            <person name="Peterson S."/>
            <person name="Quintanilla J.D."/>
            <person name="Sprinkle R."/>
            <person name="Stephens J."/>
            <person name="Thomas P."/>
            <person name="Vaughn R."/>
            <person name="Weber M.J."/>
            <person name="Wooten L.L."/>
        </authorList>
    </citation>
    <scope>NUCLEOTIDE SEQUENCE [LARGE SCALE GENOMIC DNA]</scope>
    <source>
        <strain>ATCC 33889 / DSM 1251</strain>
    </source>
</reference>
<keyword id="KW-0012">Acyltransferase</keyword>
<keyword id="KW-0028">Amino-acid biosynthesis</keyword>
<keyword id="KW-0963">Cytoplasm</keyword>
<keyword id="KW-0220">Diaminopimelate biosynthesis</keyword>
<keyword id="KW-0457">Lysine biosynthesis</keyword>
<keyword id="KW-1185">Reference proteome</keyword>
<keyword id="KW-0808">Transferase</keyword>
<proteinExistence type="inferred from homology"/>
<feature type="chain" id="PRO_0000412270" description="2,3,4,5-tetrahydropyridine-2,6-dicarboxylate N-succinyltransferase">
    <location>
        <begin position="1"/>
        <end position="398"/>
    </location>
</feature>
<feature type="active site" description="Acyl-anhydride intermediate" evidence="1">
    <location>
        <position position="268"/>
    </location>
</feature>
<feature type="binding site" evidence="1">
    <location>
        <position position="270"/>
    </location>
    <ligand>
        <name>succinyl-CoA</name>
        <dbReference type="ChEBI" id="CHEBI:57292"/>
    </ligand>
</feature>
<feature type="binding site" evidence="1">
    <location>
        <position position="285"/>
    </location>
    <ligand>
        <name>succinyl-CoA</name>
        <dbReference type="ChEBI" id="CHEBI:57292"/>
    </ligand>
</feature>
<feature type="binding site" evidence="1">
    <location>
        <position position="288"/>
    </location>
    <ligand>
        <name>succinyl-CoA</name>
        <dbReference type="ChEBI" id="CHEBI:57292"/>
    </ligand>
</feature>
<feature type="binding site" evidence="1">
    <location>
        <position position="311"/>
    </location>
    <ligand>
        <name>succinyl-CoA</name>
        <dbReference type="ChEBI" id="CHEBI:57292"/>
    </ligand>
</feature>
<feature type="binding site" evidence="1">
    <location>
        <begin position="326"/>
        <end position="327"/>
    </location>
    <ligand>
        <name>succinyl-CoA</name>
        <dbReference type="ChEBI" id="CHEBI:57292"/>
    </ligand>
</feature>
<feature type="binding site" evidence="1">
    <location>
        <position position="334"/>
    </location>
    <ligand>
        <name>succinyl-CoA</name>
        <dbReference type="ChEBI" id="CHEBI:57292"/>
    </ligand>
</feature>
<feature type="binding site" evidence="1">
    <location>
        <position position="361"/>
    </location>
    <ligand>
        <name>succinyl-CoA</name>
        <dbReference type="ChEBI" id="CHEBI:57292"/>
    </ligand>
</feature>
<feature type="binding site" evidence="1">
    <location>
        <begin position="374"/>
        <end position="377"/>
    </location>
    <ligand>
        <name>succinyl-CoA</name>
        <dbReference type="ChEBI" id="CHEBI:57292"/>
    </ligand>
</feature>
<comment type="function">
    <text evidence="1">Catalyzes the conversion of the cyclic tetrahydrodipicolinate (THDP) into the acyclic N-succinyl-L-2-amino-6-oxopimelate using succinyl-CoA.</text>
</comment>
<comment type="catalytic activity">
    <reaction evidence="1">
        <text>(S)-2,3,4,5-tetrahydrodipicolinate + succinyl-CoA + H2O = (S)-2-succinylamino-6-oxoheptanedioate + CoA</text>
        <dbReference type="Rhea" id="RHEA:17325"/>
        <dbReference type="ChEBI" id="CHEBI:15377"/>
        <dbReference type="ChEBI" id="CHEBI:15685"/>
        <dbReference type="ChEBI" id="CHEBI:16845"/>
        <dbReference type="ChEBI" id="CHEBI:57287"/>
        <dbReference type="ChEBI" id="CHEBI:57292"/>
        <dbReference type="EC" id="2.3.1.117"/>
    </reaction>
</comment>
<comment type="pathway">
    <text evidence="1">Amino-acid biosynthesis; L-lysine biosynthesis via DAP pathway; LL-2,6-diaminopimelate from (S)-tetrahydrodipicolinate (succinylase route): step 1/3.</text>
</comment>
<comment type="subunit">
    <text evidence="1">Homotrimer.</text>
</comment>
<comment type="subcellular location">
    <subcellularLocation>
        <location evidence="1">Cytoplasm</location>
    </subcellularLocation>
</comment>
<comment type="similarity">
    <text evidence="1">Belongs to the type 2 tetrahydrodipicolinate N-succinyltransferase family.</text>
</comment>
<comment type="sequence caution" evidence="2">
    <conflict type="erroneous initiation">
        <sequence resource="EMBL-CDS" id="ABB44371"/>
    </conflict>
    <text>Extended N-terminus.</text>
</comment>
<sequence length="398" mass="43231">MEIIQTTEAFKALVQDIKTSINGYKEPLAFGVCRVDMGQLNLEKTLQATYPVINWNENFGSAAIFIKALQEQGVEIDFTQSEVICNINKAFLKSCLNAFSPYSEEAYGDAHKNIQVISALYNQIATSGSKDGEFKVTFIFADEPLKSVEATYLKLYALSQAKVEIRSINLNGAFGALPNVAWSNGKPLELDYLREFEIELKLANEYPHIEFVDKFPRFLQHIIPADNTRILDTSKVRFGAQLAAGTTVMPGASYVNFNAGTTGAVMVEGRISSSAVVGAGSDIGGGASILGVLSGTDGNPITIGKNTLLGANSTCGIPLGDGCIIDGGLAVFAGTKFHINDAELIELKKVNPNTKFDNYMKGWELAGLHGLHFRQNSLNGQYVVQRSTREIKLNTDLH</sequence>
<evidence type="ECO:0000255" key="1">
    <source>
        <dbReference type="HAMAP-Rule" id="MF_02122"/>
    </source>
</evidence>
<evidence type="ECO:0000305" key="2"/>